<gene>
    <name type="ORF">IIV3-079L</name>
</gene>
<reference key="1">
    <citation type="journal article" date="2006" name="J. Virol.">
        <title>Genome of invertebrate iridescent virus type 3 (mosquito iridescent virus).</title>
        <authorList>
            <person name="Delhon G."/>
            <person name="Tulman E.R."/>
            <person name="Afonso C.L."/>
            <person name="Lu Z."/>
            <person name="Becnel J.J."/>
            <person name="Moser B.A."/>
            <person name="Kutish G.F."/>
            <person name="Rock D.L."/>
        </authorList>
    </citation>
    <scope>NUCLEOTIDE SEQUENCE [LARGE SCALE GENOMIC DNA]</scope>
</reference>
<organismHost>
    <name type="scientific">Aedes vexans</name>
    <name type="common">Inland floodwater mosquito</name>
    <name type="synonym">Culex vexans</name>
    <dbReference type="NCBI Taxonomy" id="7163"/>
</organismHost>
<organismHost>
    <name type="scientific">Culex territans</name>
    <dbReference type="NCBI Taxonomy" id="42431"/>
</organismHost>
<organismHost>
    <name type="scientific">Culiseta annulata</name>
    <dbReference type="NCBI Taxonomy" id="332058"/>
</organismHost>
<organismHost>
    <name type="scientific">Ochlerotatus sollicitans</name>
    <name type="common">eastern saltmarsh mosquito</name>
    <dbReference type="NCBI Taxonomy" id="310513"/>
</organismHost>
<organismHost>
    <name type="scientific">Ochlerotatus taeniorhynchus</name>
    <name type="common">Black salt marsh mosquito</name>
    <name type="synonym">Aedes taeniorhynchus</name>
    <dbReference type="NCBI Taxonomy" id="329105"/>
</organismHost>
<organismHost>
    <name type="scientific">Psorophora ferox</name>
    <dbReference type="NCBI Taxonomy" id="7183"/>
</organismHost>
<evidence type="ECO:0000305" key="1"/>
<sequence length="395" mass="46699">MSKKQTTAAATAPIDILELHTQIQQFIETESKNVVVLEAKLVKINQLLECDYLRPRIIYRLKMEKEMCEKLIIEHHNLDFFNIDVAHLIEEYHMLNRTEIVLPFFSPTKDQLTQQLEHKRKKMDLEKQFLNKLKNYTHLKNFEFMMKHCEFIPKSSPPPCVCGNKTEFIKDDDRAVCAICCTEQSLISNTSSFSDVGRVNMASKYTYNRKVHFRDCITQYQGKQKTHIPEEIYTILETKLLEKNLLNTEPGLTVEKRYEKVTRAMVLDILKELGSKDVKKFYDDIVLIHHTLTKQPCDNIEYLEDSLLDDFDKLTETYDNLYVNQDSPDDERGGTKRKNFINAQFVLYQLLRKHNHPCNSMDFLTLKKSERKRFHHTICKKLFSILEWKYSYSIC</sequence>
<comment type="function">
    <text evidence="1">Transcription activation.</text>
</comment>
<comment type="similarity">
    <text evidence="1">Belongs to the IIV-6 282R family.</text>
</comment>
<dbReference type="EMBL" id="DQ643392">
    <property type="protein sequence ID" value="ABF82109.1"/>
    <property type="molecule type" value="Genomic_DNA"/>
</dbReference>
<dbReference type="RefSeq" id="YP_654651.1">
    <property type="nucleotide sequence ID" value="NC_008187.1"/>
</dbReference>
<dbReference type="SMR" id="Q196Y1"/>
<dbReference type="KEGG" id="vg:4156290"/>
<dbReference type="OrthoDB" id="8889at10239"/>
<dbReference type="Proteomes" id="UP000001358">
    <property type="component" value="Genome"/>
</dbReference>
<dbReference type="GO" id="GO:0046782">
    <property type="term" value="P:regulation of viral transcription"/>
    <property type="evidence" value="ECO:0007669"/>
    <property type="project" value="InterPro"/>
</dbReference>
<dbReference type="InterPro" id="IPR007031">
    <property type="entry name" value="Poxvirus_VLTF3"/>
</dbReference>
<dbReference type="Pfam" id="PF04947">
    <property type="entry name" value="Pox_VLTF3"/>
    <property type="match status" value="1"/>
</dbReference>
<accession>Q196Y1</accession>
<name>VF282_IIV3</name>
<organism>
    <name type="scientific">Invertebrate iridescent virus 3</name>
    <name type="common">IIV-3</name>
    <name type="synonym">Mosquito iridescent virus</name>
    <dbReference type="NCBI Taxonomy" id="345201"/>
    <lineage>
        <taxon>Viruses</taxon>
        <taxon>Varidnaviria</taxon>
        <taxon>Bamfordvirae</taxon>
        <taxon>Nucleocytoviricota</taxon>
        <taxon>Megaviricetes</taxon>
        <taxon>Pimascovirales</taxon>
        <taxon>Iridoviridae</taxon>
        <taxon>Betairidovirinae</taxon>
        <taxon>Chloriridovirus</taxon>
    </lineage>
</organism>
<protein>
    <recommendedName>
        <fullName>Putative transcription factor 079L</fullName>
    </recommendedName>
</protein>
<feature type="chain" id="PRO_0000377764" description="Putative transcription factor 079L">
    <location>
        <begin position="1"/>
        <end position="395"/>
    </location>
</feature>
<keyword id="KW-0010">Activator</keyword>
<keyword id="KW-1185">Reference proteome</keyword>
<keyword id="KW-0804">Transcription</keyword>
<keyword id="KW-0805">Transcription regulation</keyword>
<proteinExistence type="inferred from homology"/>